<evidence type="ECO:0000255" key="1">
    <source>
        <dbReference type="HAMAP-Rule" id="MF_00694"/>
    </source>
</evidence>
<feature type="chain" id="PRO_1000212624" description="Probable 5-dehydro-4-deoxyglucarate dehydratase">
    <location>
        <begin position="1"/>
        <end position="303"/>
    </location>
</feature>
<organism>
    <name type="scientific">Variovorax paradoxus (strain S110)</name>
    <dbReference type="NCBI Taxonomy" id="543728"/>
    <lineage>
        <taxon>Bacteria</taxon>
        <taxon>Pseudomonadati</taxon>
        <taxon>Pseudomonadota</taxon>
        <taxon>Betaproteobacteria</taxon>
        <taxon>Burkholderiales</taxon>
        <taxon>Comamonadaceae</taxon>
        <taxon>Variovorax</taxon>
    </lineage>
</organism>
<sequence>MNPQELKSIMGSGLLSFPLTDFDANGDFNKKGYEKRLEWLAPYGASALFAAGGTGEFFSLTGDEYPGIIQTAVDTCRGVVPIIAGAGGPTRFAIQCAQAAEKAGAHGILLLPHYLTEAGQEGLAAHVEAVCKSVKFGVIVYNRATSRLKPETLAALAERNPNLVGFKDGVGDIEAMVAIYQKMGDRFAYLGGLPTAEVYAAAYKALGTPVYSSAVFNFIPKTAMDFYKAVAADDLPTQHRLLKNFFMPYLDLRNRVPGYAVSIVKAGAKIVGHDAGPVRTPLTDLQPAEMEQLKALIDALGPQ</sequence>
<protein>
    <recommendedName>
        <fullName evidence="1">Probable 5-dehydro-4-deoxyglucarate dehydratase</fullName>
        <ecNumber evidence="1">4.2.1.41</ecNumber>
    </recommendedName>
    <alternativeName>
        <fullName evidence="1">5-keto-4-deoxy-glucarate dehydratase</fullName>
        <shortName evidence="1">KDGDH</shortName>
    </alternativeName>
</protein>
<keyword id="KW-0456">Lyase</keyword>
<dbReference type="EC" id="4.2.1.41" evidence="1"/>
<dbReference type="EMBL" id="CP001635">
    <property type="protein sequence ID" value="ACS18379.1"/>
    <property type="molecule type" value="Genomic_DNA"/>
</dbReference>
<dbReference type="SMR" id="C5CU29"/>
<dbReference type="STRING" id="543728.Vapar_1729"/>
<dbReference type="KEGG" id="vap:Vapar_1729"/>
<dbReference type="eggNOG" id="COG0329">
    <property type="taxonomic scope" value="Bacteria"/>
</dbReference>
<dbReference type="HOGENOM" id="CLU_049343_5_2_4"/>
<dbReference type="OrthoDB" id="8995637at2"/>
<dbReference type="UniPathway" id="UPA00564">
    <property type="reaction ID" value="UER00628"/>
</dbReference>
<dbReference type="GO" id="GO:0008840">
    <property type="term" value="F:4-hydroxy-tetrahydrodipicolinate synthase activity"/>
    <property type="evidence" value="ECO:0007669"/>
    <property type="project" value="TreeGrafter"/>
</dbReference>
<dbReference type="GO" id="GO:0047448">
    <property type="term" value="F:5-dehydro-4-deoxyglucarate dehydratase activity"/>
    <property type="evidence" value="ECO:0007669"/>
    <property type="project" value="UniProtKB-UniRule"/>
</dbReference>
<dbReference type="GO" id="GO:0042838">
    <property type="term" value="P:D-glucarate catabolic process"/>
    <property type="evidence" value="ECO:0007669"/>
    <property type="project" value="UniProtKB-UniRule"/>
</dbReference>
<dbReference type="CDD" id="cd00951">
    <property type="entry name" value="KDGDH"/>
    <property type="match status" value="1"/>
</dbReference>
<dbReference type="Gene3D" id="3.20.20.70">
    <property type="entry name" value="Aldolase class I"/>
    <property type="match status" value="1"/>
</dbReference>
<dbReference type="HAMAP" id="MF_00694">
    <property type="entry name" value="KDGDH"/>
    <property type="match status" value="1"/>
</dbReference>
<dbReference type="InterPro" id="IPR013785">
    <property type="entry name" value="Aldolase_TIM"/>
</dbReference>
<dbReference type="InterPro" id="IPR002220">
    <property type="entry name" value="DapA-like"/>
</dbReference>
<dbReference type="InterPro" id="IPR017655">
    <property type="entry name" value="Dehydro-deoxyglucarate_dehyd"/>
</dbReference>
<dbReference type="NCBIfam" id="TIGR03249">
    <property type="entry name" value="KdgD"/>
    <property type="match status" value="1"/>
</dbReference>
<dbReference type="NCBIfam" id="NF002958">
    <property type="entry name" value="PRK03620.1"/>
    <property type="match status" value="1"/>
</dbReference>
<dbReference type="PANTHER" id="PTHR12128:SF19">
    <property type="entry name" value="5-DEHYDRO-4-DEOXYGLUCARATE DEHYDRATASE 2-RELATED"/>
    <property type="match status" value="1"/>
</dbReference>
<dbReference type="PANTHER" id="PTHR12128">
    <property type="entry name" value="DIHYDRODIPICOLINATE SYNTHASE"/>
    <property type="match status" value="1"/>
</dbReference>
<dbReference type="Pfam" id="PF00701">
    <property type="entry name" value="DHDPS"/>
    <property type="match status" value="1"/>
</dbReference>
<dbReference type="PIRSF" id="PIRSF001365">
    <property type="entry name" value="DHDPS"/>
    <property type="match status" value="1"/>
</dbReference>
<dbReference type="SMART" id="SM01130">
    <property type="entry name" value="DHDPS"/>
    <property type="match status" value="1"/>
</dbReference>
<dbReference type="SUPFAM" id="SSF51569">
    <property type="entry name" value="Aldolase"/>
    <property type="match status" value="1"/>
</dbReference>
<accession>C5CU29</accession>
<proteinExistence type="inferred from homology"/>
<comment type="catalytic activity">
    <reaction evidence="1">
        <text>5-dehydro-4-deoxy-D-glucarate + H(+) = 2,5-dioxopentanoate + CO2 + H2O</text>
        <dbReference type="Rhea" id="RHEA:24608"/>
        <dbReference type="ChEBI" id="CHEBI:15377"/>
        <dbReference type="ChEBI" id="CHEBI:15378"/>
        <dbReference type="ChEBI" id="CHEBI:16526"/>
        <dbReference type="ChEBI" id="CHEBI:42819"/>
        <dbReference type="ChEBI" id="CHEBI:58136"/>
        <dbReference type="EC" id="4.2.1.41"/>
    </reaction>
</comment>
<comment type="pathway">
    <text evidence="1">Carbohydrate acid metabolism; D-glucarate degradation; 2,5-dioxopentanoate from D-glucarate: step 2/2.</text>
</comment>
<comment type="similarity">
    <text evidence="1">Belongs to the DapA family.</text>
</comment>
<reference key="1">
    <citation type="journal article" date="2011" name="J. Bacteriol.">
        <title>Complete genome sequence of the metabolically versatile plant growth-promoting endophyte, Variovorax paradoxus S110.</title>
        <authorList>
            <person name="Han J.I."/>
            <person name="Choi H.K."/>
            <person name="Lee S.W."/>
            <person name="Orwin P.M."/>
            <person name="Kim J."/>
            <person name="Laroe S.L."/>
            <person name="Kim T.G."/>
            <person name="O'Neil J."/>
            <person name="Leadbetter J.R."/>
            <person name="Lee S.Y."/>
            <person name="Hur C.G."/>
            <person name="Spain J.C."/>
            <person name="Ovchinnikova G."/>
            <person name="Goodwin L."/>
            <person name="Han C."/>
        </authorList>
    </citation>
    <scope>NUCLEOTIDE SEQUENCE [LARGE SCALE GENOMIC DNA]</scope>
    <source>
        <strain>S110</strain>
    </source>
</reference>
<gene>
    <name type="ordered locus">Vapar_1729</name>
</gene>
<name>KDGD_VARPS</name>